<comment type="function">
    <text evidence="1">DNA-dependent RNA polymerase catalyzes the transcription of DNA into RNA using the four ribonucleoside triphosphates as substrates.</text>
</comment>
<comment type="catalytic activity">
    <reaction evidence="1">
        <text>RNA(n) + a ribonucleoside 5'-triphosphate = RNA(n+1) + diphosphate</text>
        <dbReference type="Rhea" id="RHEA:21248"/>
        <dbReference type="Rhea" id="RHEA-COMP:14527"/>
        <dbReference type="Rhea" id="RHEA-COMP:17342"/>
        <dbReference type="ChEBI" id="CHEBI:33019"/>
        <dbReference type="ChEBI" id="CHEBI:61557"/>
        <dbReference type="ChEBI" id="CHEBI:140395"/>
        <dbReference type="EC" id="2.7.7.6"/>
    </reaction>
</comment>
<comment type="subunit">
    <text evidence="1">Homodimer. The RNAP catalytic core consists of 2 alpha, 1 beta, 1 beta' and 1 omega subunit. When a sigma factor is associated with the core the holoenzyme is formed, which can initiate transcription.</text>
</comment>
<comment type="domain">
    <text evidence="1">The N-terminal domain is essential for RNAP assembly and basal transcription, whereas the C-terminal domain is involved in interaction with transcriptional regulators and with upstream promoter elements.</text>
</comment>
<comment type="similarity">
    <text evidence="1">Belongs to the RNA polymerase alpha chain family.</text>
</comment>
<accession>Q1GVN6</accession>
<dbReference type="EC" id="2.7.7.6" evidence="1"/>
<dbReference type="EMBL" id="CP000356">
    <property type="protein sequence ID" value="ABF52286.1"/>
    <property type="molecule type" value="Genomic_DNA"/>
</dbReference>
<dbReference type="RefSeq" id="WP_011540877.1">
    <property type="nucleotide sequence ID" value="NC_008048.1"/>
</dbReference>
<dbReference type="SMR" id="Q1GVN6"/>
<dbReference type="STRING" id="317655.Sala_0565"/>
<dbReference type="KEGG" id="sal:Sala_0565"/>
<dbReference type="eggNOG" id="COG0202">
    <property type="taxonomic scope" value="Bacteria"/>
</dbReference>
<dbReference type="HOGENOM" id="CLU_053084_0_0_5"/>
<dbReference type="OrthoDB" id="9805706at2"/>
<dbReference type="Proteomes" id="UP000006578">
    <property type="component" value="Chromosome"/>
</dbReference>
<dbReference type="GO" id="GO:0005737">
    <property type="term" value="C:cytoplasm"/>
    <property type="evidence" value="ECO:0007669"/>
    <property type="project" value="UniProtKB-ARBA"/>
</dbReference>
<dbReference type="GO" id="GO:0000428">
    <property type="term" value="C:DNA-directed RNA polymerase complex"/>
    <property type="evidence" value="ECO:0007669"/>
    <property type="project" value="UniProtKB-KW"/>
</dbReference>
<dbReference type="GO" id="GO:0003677">
    <property type="term" value="F:DNA binding"/>
    <property type="evidence" value="ECO:0007669"/>
    <property type="project" value="UniProtKB-UniRule"/>
</dbReference>
<dbReference type="GO" id="GO:0003899">
    <property type="term" value="F:DNA-directed RNA polymerase activity"/>
    <property type="evidence" value="ECO:0007669"/>
    <property type="project" value="UniProtKB-UniRule"/>
</dbReference>
<dbReference type="GO" id="GO:0046983">
    <property type="term" value="F:protein dimerization activity"/>
    <property type="evidence" value="ECO:0007669"/>
    <property type="project" value="InterPro"/>
</dbReference>
<dbReference type="GO" id="GO:0006351">
    <property type="term" value="P:DNA-templated transcription"/>
    <property type="evidence" value="ECO:0007669"/>
    <property type="project" value="UniProtKB-UniRule"/>
</dbReference>
<dbReference type="CDD" id="cd06928">
    <property type="entry name" value="RNAP_alpha_NTD"/>
    <property type="match status" value="1"/>
</dbReference>
<dbReference type="FunFam" id="1.10.150.20:FF:000001">
    <property type="entry name" value="DNA-directed RNA polymerase subunit alpha"/>
    <property type="match status" value="1"/>
</dbReference>
<dbReference type="FunFam" id="2.170.120.12:FF:000001">
    <property type="entry name" value="DNA-directed RNA polymerase subunit alpha"/>
    <property type="match status" value="1"/>
</dbReference>
<dbReference type="Gene3D" id="1.10.150.20">
    <property type="entry name" value="5' to 3' exonuclease, C-terminal subdomain"/>
    <property type="match status" value="1"/>
</dbReference>
<dbReference type="Gene3D" id="2.170.120.12">
    <property type="entry name" value="DNA-directed RNA polymerase, insert domain"/>
    <property type="match status" value="1"/>
</dbReference>
<dbReference type="Gene3D" id="3.30.1360.10">
    <property type="entry name" value="RNA polymerase, RBP11-like subunit"/>
    <property type="match status" value="1"/>
</dbReference>
<dbReference type="HAMAP" id="MF_00059">
    <property type="entry name" value="RNApol_bact_RpoA"/>
    <property type="match status" value="1"/>
</dbReference>
<dbReference type="InterPro" id="IPR011262">
    <property type="entry name" value="DNA-dir_RNA_pol_insert"/>
</dbReference>
<dbReference type="InterPro" id="IPR011263">
    <property type="entry name" value="DNA-dir_RNA_pol_RpoA/D/Rpb3"/>
</dbReference>
<dbReference type="InterPro" id="IPR011773">
    <property type="entry name" value="DNA-dir_RpoA"/>
</dbReference>
<dbReference type="InterPro" id="IPR036603">
    <property type="entry name" value="RBP11-like"/>
</dbReference>
<dbReference type="InterPro" id="IPR011260">
    <property type="entry name" value="RNAP_asu_C"/>
</dbReference>
<dbReference type="InterPro" id="IPR036643">
    <property type="entry name" value="RNApol_insert_sf"/>
</dbReference>
<dbReference type="NCBIfam" id="NF003513">
    <property type="entry name" value="PRK05182.1-2"/>
    <property type="match status" value="1"/>
</dbReference>
<dbReference type="NCBIfam" id="NF003519">
    <property type="entry name" value="PRK05182.2-5"/>
    <property type="match status" value="1"/>
</dbReference>
<dbReference type="NCBIfam" id="TIGR02027">
    <property type="entry name" value="rpoA"/>
    <property type="match status" value="1"/>
</dbReference>
<dbReference type="Pfam" id="PF01000">
    <property type="entry name" value="RNA_pol_A_bac"/>
    <property type="match status" value="1"/>
</dbReference>
<dbReference type="Pfam" id="PF03118">
    <property type="entry name" value="RNA_pol_A_CTD"/>
    <property type="match status" value="1"/>
</dbReference>
<dbReference type="Pfam" id="PF01193">
    <property type="entry name" value="RNA_pol_L"/>
    <property type="match status" value="1"/>
</dbReference>
<dbReference type="SMART" id="SM00662">
    <property type="entry name" value="RPOLD"/>
    <property type="match status" value="1"/>
</dbReference>
<dbReference type="SUPFAM" id="SSF47789">
    <property type="entry name" value="C-terminal domain of RNA polymerase alpha subunit"/>
    <property type="match status" value="1"/>
</dbReference>
<dbReference type="SUPFAM" id="SSF56553">
    <property type="entry name" value="Insert subdomain of RNA polymerase alpha subunit"/>
    <property type="match status" value="1"/>
</dbReference>
<dbReference type="SUPFAM" id="SSF55257">
    <property type="entry name" value="RBP11-like subunits of RNA polymerase"/>
    <property type="match status" value="1"/>
</dbReference>
<name>RPOA_SPHAL</name>
<evidence type="ECO:0000255" key="1">
    <source>
        <dbReference type="HAMAP-Rule" id="MF_00059"/>
    </source>
</evidence>
<gene>
    <name evidence="1" type="primary">rpoA</name>
    <name type="ordered locus">Sala_0565</name>
</gene>
<feature type="chain" id="PRO_0000264549" description="DNA-directed RNA polymerase subunit alpha">
    <location>
        <begin position="1"/>
        <end position="352"/>
    </location>
</feature>
<feature type="region of interest" description="Alpha N-terminal domain (alpha-NTD)" evidence="1">
    <location>
        <begin position="1"/>
        <end position="236"/>
    </location>
</feature>
<feature type="region of interest" description="Alpha C-terminal domain (alpha-CTD)" evidence="1">
    <location>
        <begin position="257"/>
        <end position="352"/>
    </location>
</feature>
<proteinExistence type="inferred from homology"/>
<keyword id="KW-0240">DNA-directed RNA polymerase</keyword>
<keyword id="KW-0548">Nucleotidyltransferase</keyword>
<keyword id="KW-1185">Reference proteome</keyword>
<keyword id="KW-0804">Transcription</keyword>
<keyword id="KW-0808">Transferase</keyword>
<protein>
    <recommendedName>
        <fullName evidence="1">DNA-directed RNA polymerase subunit alpha</fullName>
        <shortName evidence="1">RNAP subunit alpha</shortName>
        <ecNumber evidence="1">2.7.7.6</ecNumber>
    </recommendedName>
    <alternativeName>
        <fullName evidence="1">RNA polymerase subunit alpha</fullName>
    </alternativeName>
    <alternativeName>
        <fullName evidence="1">Transcriptase subunit alpha</fullName>
    </alternativeName>
</protein>
<sequence length="352" mass="38362">MTVNIRNWQELKKPSNLEIKTGGDGKRKATFVAEPLERGFGLTLGNALRRVLLSSLQGAAITSIKIENVLHEFSSLAGVREDVTDIVLNVKQIALKMEGEGPKRLQLSATGPATVKAGDIMVSGDIKVMNPNHVICHLDEGATLNMELVADTGKGYVPATANRPADAPIGLIPVDSLYSPVRQVAYKVDNARIGQELDYDKLNLTVETDGTVTPEDAVAYAARILQDQLQVFVHFEEAMSDSGLIGMAAPSAASDESDVNQLNRFLLKKVDELELSVRSANCLKNDNIIYIGDLVQKTEAEMLRTPNFGRKSLNEIKEVLSSMGLRLGMDIPGWPPENIEEMAKKLEQELLG</sequence>
<organism>
    <name type="scientific">Sphingopyxis alaskensis (strain DSM 13593 / LMG 18877 / RB2256)</name>
    <name type="common">Sphingomonas alaskensis</name>
    <dbReference type="NCBI Taxonomy" id="317655"/>
    <lineage>
        <taxon>Bacteria</taxon>
        <taxon>Pseudomonadati</taxon>
        <taxon>Pseudomonadota</taxon>
        <taxon>Alphaproteobacteria</taxon>
        <taxon>Sphingomonadales</taxon>
        <taxon>Sphingomonadaceae</taxon>
        <taxon>Sphingopyxis</taxon>
    </lineage>
</organism>
<reference key="1">
    <citation type="journal article" date="2009" name="Proc. Natl. Acad. Sci. U.S.A.">
        <title>The genomic basis of trophic strategy in marine bacteria.</title>
        <authorList>
            <person name="Lauro F.M."/>
            <person name="McDougald D."/>
            <person name="Thomas T."/>
            <person name="Williams T.J."/>
            <person name="Egan S."/>
            <person name="Rice S."/>
            <person name="DeMaere M.Z."/>
            <person name="Ting L."/>
            <person name="Ertan H."/>
            <person name="Johnson J."/>
            <person name="Ferriera S."/>
            <person name="Lapidus A."/>
            <person name="Anderson I."/>
            <person name="Kyrpides N."/>
            <person name="Munk A.C."/>
            <person name="Detter C."/>
            <person name="Han C.S."/>
            <person name="Brown M.V."/>
            <person name="Robb F.T."/>
            <person name="Kjelleberg S."/>
            <person name="Cavicchioli R."/>
        </authorList>
    </citation>
    <scope>NUCLEOTIDE SEQUENCE [LARGE SCALE GENOMIC DNA]</scope>
    <source>
        <strain>DSM 13593 / LMG 18877 / RB2256</strain>
    </source>
</reference>